<dbReference type="EC" id="2.7.7.6" evidence="1"/>
<dbReference type="EMBL" id="AM040264">
    <property type="protein sequence ID" value="CAJ11220.1"/>
    <property type="molecule type" value="Genomic_DNA"/>
</dbReference>
<dbReference type="RefSeq" id="WP_002966855.1">
    <property type="nucleotide sequence ID" value="NZ_KN046823.1"/>
</dbReference>
<dbReference type="SMR" id="Q2YM15"/>
<dbReference type="STRING" id="359391.BAB1_1264"/>
<dbReference type="GeneID" id="97533517"/>
<dbReference type="KEGG" id="bmf:BAB1_1264"/>
<dbReference type="PATRIC" id="fig|359391.11.peg.164"/>
<dbReference type="HOGENOM" id="CLU_000524_4_0_5"/>
<dbReference type="PhylomeDB" id="Q2YM15"/>
<dbReference type="PRO" id="PR:Q2YM15"/>
<dbReference type="Proteomes" id="UP000002719">
    <property type="component" value="Chromosome I"/>
</dbReference>
<dbReference type="GO" id="GO:0000428">
    <property type="term" value="C:DNA-directed RNA polymerase complex"/>
    <property type="evidence" value="ECO:0007669"/>
    <property type="project" value="UniProtKB-KW"/>
</dbReference>
<dbReference type="GO" id="GO:0003677">
    <property type="term" value="F:DNA binding"/>
    <property type="evidence" value="ECO:0007669"/>
    <property type="project" value="UniProtKB-UniRule"/>
</dbReference>
<dbReference type="GO" id="GO:0003899">
    <property type="term" value="F:DNA-directed RNA polymerase activity"/>
    <property type="evidence" value="ECO:0007669"/>
    <property type="project" value="UniProtKB-UniRule"/>
</dbReference>
<dbReference type="GO" id="GO:0032549">
    <property type="term" value="F:ribonucleoside binding"/>
    <property type="evidence" value="ECO:0007669"/>
    <property type="project" value="InterPro"/>
</dbReference>
<dbReference type="GO" id="GO:0006351">
    <property type="term" value="P:DNA-templated transcription"/>
    <property type="evidence" value="ECO:0007669"/>
    <property type="project" value="UniProtKB-UniRule"/>
</dbReference>
<dbReference type="CDD" id="cd00653">
    <property type="entry name" value="RNA_pol_B_RPB2"/>
    <property type="match status" value="1"/>
</dbReference>
<dbReference type="FunFam" id="2.40.50.100:FF:000006">
    <property type="entry name" value="DNA-directed RNA polymerase subunit beta"/>
    <property type="match status" value="1"/>
</dbReference>
<dbReference type="FunFam" id="3.90.1800.10:FF:000001">
    <property type="entry name" value="DNA-directed RNA polymerase subunit beta"/>
    <property type="match status" value="1"/>
</dbReference>
<dbReference type="Gene3D" id="2.40.50.100">
    <property type="match status" value="1"/>
</dbReference>
<dbReference type="Gene3D" id="2.40.50.150">
    <property type="match status" value="1"/>
</dbReference>
<dbReference type="Gene3D" id="3.90.1100.10">
    <property type="match status" value="2"/>
</dbReference>
<dbReference type="Gene3D" id="2.30.150.10">
    <property type="entry name" value="DNA-directed RNA polymerase, beta subunit, external 1 domain"/>
    <property type="match status" value="1"/>
</dbReference>
<dbReference type="Gene3D" id="2.40.270.10">
    <property type="entry name" value="DNA-directed RNA polymerase, subunit 2, domain 6"/>
    <property type="match status" value="2"/>
</dbReference>
<dbReference type="Gene3D" id="3.90.1800.10">
    <property type="entry name" value="RNA polymerase alpha subunit dimerisation domain"/>
    <property type="match status" value="1"/>
</dbReference>
<dbReference type="Gene3D" id="3.90.1110.10">
    <property type="entry name" value="RNA polymerase Rpb2, domain 2"/>
    <property type="match status" value="2"/>
</dbReference>
<dbReference type="HAMAP" id="MF_01321">
    <property type="entry name" value="RNApol_bact_RpoB"/>
    <property type="match status" value="1"/>
</dbReference>
<dbReference type="InterPro" id="IPR042107">
    <property type="entry name" value="DNA-dir_RNA_pol_bsu_ext_1_sf"/>
</dbReference>
<dbReference type="InterPro" id="IPR019462">
    <property type="entry name" value="DNA-dir_RNA_pol_bsu_external_1"/>
</dbReference>
<dbReference type="InterPro" id="IPR015712">
    <property type="entry name" value="DNA-dir_RNA_pol_su2"/>
</dbReference>
<dbReference type="InterPro" id="IPR007120">
    <property type="entry name" value="DNA-dir_RNAP_su2_dom"/>
</dbReference>
<dbReference type="InterPro" id="IPR037033">
    <property type="entry name" value="DNA-dir_RNAP_su2_hyb_sf"/>
</dbReference>
<dbReference type="InterPro" id="IPR010243">
    <property type="entry name" value="RNA_pol_bsu_bac"/>
</dbReference>
<dbReference type="InterPro" id="IPR007121">
    <property type="entry name" value="RNA_pol_bsu_CS"/>
</dbReference>
<dbReference type="InterPro" id="IPR007644">
    <property type="entry name" value="RNA_pol_bsu_protrusion"/>
</dbReference>
<dbReference type="InterPro" id="IPR007642">
    <property type="entry name" value="RNA_pol_Rpb2_2"/>
</dbReference>
<dbReference type="InterPro" id="IPR037034">
    <property type="entry name" value="RNA_pol_Rpb2_2_sf"/>
</dbReference>
<dbReference type="InterPro" id="IPR007645">
    <property type="entry name" value="RNA_pol_Rpb2_3"/>
</dbReference>
<dbReference type="InterPro" id="IPR007641">
    <property type="entry name" value="RNA_pol_Rpb2_7"/>
</dbReference>
<dbReference type="InterPro" id="IPR014724">
    <property type="entry name" value="RNA_pol_RPB2_OB-fold"/>
</dbReference>
<dbReference type="NCBIfam" id="NF001616">
    <property type="entry name" value="PRK00405.1"/>
    <property type="match status" value="1"/>
</dbReference>
<dbReference type="NCBIfam" id="TIGR02013">
    <property type="entry name" value="rpoB"/>
    <property type="match status" value="1"/>
</dbReference>
<dbReference type="PANTHER" id="PTHR20856">
    <property type="entry name" value="DNA-DIRECTED RNA POLYMERASE I SUBUNIT 2"/>
    <property type="match status" value="1"/>
</dbReference>
<dbReference type="Pfam" id="PF04563">
    <property type="entry name" value="RNA_pol_Rpb2_1"/>
    <property type="match status" value="1"/>
</dbReference>
<dbReference type="Pfam" id="PF04561">
    <property type="entry name" value="RNA_pol_Rpb2_2"/>
    <property type="match status" value="2"/>
</dbReference>
<dbReference type="Pfam" id="PF04565">
    <property type="entry name" value="RNA_pol_Rpb2_3"/>
    <property type="match status" value="1"/>
</dbReference>
<dbReference type="Pfam" id="PF10385">
    <property type="entry name" value="RNA_pol_Rpb2_45"/>
    <property type="match status" value="1"/>
</dbReference>
<dbReference type="Pfam" id="PF00562">
    <property type="entry name" value="RNA_pol_Rpb2_6"/>
    <property type="match status" value="1"/>
</dbReference>
<dbReference type="Pfam" id="PF04560">
    <property type="entry name" value="RNA_pol_Rpb2_7"/>
    <property type="match status" value="1"/>
</dbReference>
<dbReference type="SUPFAM" id="SSF64484">
    <property type="entry name" value="beta and beta-prime subunits of DNA dependent RNA-polymerase"/>
    <property type="match status" value="1"/>
</dbReference>
<dbReference type="PROSITE" id="PS01166">
    <property type="entry name" value="RNA_POL_BETA"/>
    <property type="match status" value="1"/>
</dbReference>
<keyword id="KW-0240">DNA-directed RNA polymerase</keyword>
<keyword id="KW-0548">Nucleotidyltransferase</keyword>
<keyword id="KW-1185">Reference proteome</keyword>
<keyword id="KW-0804">Transcription</keyword>
<keyword id="KW-0808">Transferase</keyword>
<proteinExistence type="inferred from homology"/>
<organism>
    <name type="scientific">Brucella abortus (strain 2308)</name>
    <dbReference type="NCBI Taxonomy" id="359391"/>
    <lineage>
        <taxon>Bacteria</taxon>
        <taxon>Pseudomonadati</taxon>
        <taxon>Pseudomonadota</taxon>
        <taxon>Alphaproteobacteria</taxon>
        <taxon>Hyphomicrobiales</taxon>
        <taxon>Brucellaceae</taxon>
        <taxon>Brucella/Ochrobactrum group</taxon>
        <taxon>Brucella</taxon>
    </lineage>
</organism>
<feature type="chain" id="PRO_0000224036" description="DNA-directed RNA polymerase subunit beta">
    <location>
        <begin position="1"/>
        <end position="1377"/>
    </location>
</feature>
<protein>
    <recommendedName>
        <fullName evidence="1">DNA-directed RNA polymerase subunit beta</fullName>
        <shortName evidence="1">RNAP subunit beta</shortName>
        <ecNumber evidence="1">2.7.7.6</ecNumber>
    </recommendedName>
    <alternativeName>
        <fullName evidence="1">RNA polymerase subunit beta</fullName>
    </alternativeName>
    <alternativeName>
        <fullName evidence="1">Transcriptase subunit beta</fullName>
    </alternativeName>
</protein>
<comment type="function">
    <text evidence="1">DNA-dependent RNA polymerase catalyzes the transcription of DNA into RNA using the four ribonucleoside triphosphates as substrates.</text>
</comment>
<comment type="catalytic activity">
    <reaction evidence="1">
        <text>RNA(n) + a ribonucleoside 5'-triphosphate = RNA(n+1) + diphosphate</text>
        <dbReference type="Rhea" id="RHEA:21248"/>
        <dbReference type="Rhea" id="RHEA-COMP:14527"/>
        <dbReference type="Rhea" id="RHEA-COMP:17342"/>
        <dbReference type="ChEBI" id="CHEBI:33019"/>
        <dbReference type="ChEBI" id="CHEBI:61557"/>
        <dbReference type="ChEBI" id="CHEBI:140395"/>
        <dbReference type="EC" id="2.7.7.6"/>
    </reaction>
</comment>
<comment type="subunit">
    <text evidence="1">The RNAP catalytic core consists of 2 alpha, 1 beta, 1 beta' and 1 omega subunit. When a sigma factor is associated with the core the holoenzyme is formed, which can initiate transcription.</text>
</comment>
<comment type="similarity">
    <text evidence="1">Belongs to the RNA polymerase beta chain family.</text>
</comment>
<reference key="1">
    <citation type="journal article" date="2005" name="Infect. Immun.">
        <title>Whole-genome analyses of speciation events in pathogenic Brucellae.</title>
        <authorList>
            <person name="Chain P.S."/>
            <person name="Comerci D.J."/>
            <person name="Tolmasky M.E."/>
            <person name="Larimer F.W."/>
            <person name="Malfatti S.A."/>
            <person name="Vergez L.M."/>
            <person name="Aguero F."/>
            <person name="Land M.L."/>
            <person name="Ugalde R.A."/>
            <person name="Garcia E."/>
        </authorList>
    </citation>
    <scope>NUCLEOTIDE SEQUENCE [LARGE SCALE GENOMIC DNA]</scope>
    <source>
        <strain>2308</strain>
    </source>
</reference>
<gene>
    <name evidence="1" type="primary">rpoB</name>
    <name type="ordered locus">BAB1_1264</name>
</gene>
<evidence type="ECO:0000255" key="1">
    <source>
        <dbReference type="HAMAP-Rule" id="MF_01321"/>
    </source>
</evidence>
<name>RPOB_BRUA2</name>
<accession>Q2YM15</accession>
<sequence length="1377" mass="153669">MAQTHSFNGRKRVRKFFGKIPEVAEMPNLIEVQKASYDQFLMVEEPSGGRPDEGLQAVFKSVFPIQDFSGASMLEFVRYEFDPPKFDVDECRQRDLTYSAPLKVTLRLIVFDIDEDTGAKSIKDIKEQDVYMGDMPLMTDNGTFIVNGTERVIVSQMHRSPGVFFDHDKGKTHSSGKLLFAARVIPYRGSWLDIEFDSKDIVYARIDRRRKLPATTLLMALGMDGEEILSTFYKTVTYTRDGDNWRIPYSAERFKGMKIISDLVDADTGEVVLEAGKKLTARAAKQLAEKGLKAIKATEDDLFGSYLAEDVVNYATGEIYLEAGDEIDEKVLKTLIDTGETEINVLDIDHVNIGAYIRNTLAVDKNESRQEALFDIYRVMRPGEPPTMDSAEAMFHSLFFDSERYDLSAVGRVKMNMRLDLDAEDTVRVLRKEDILAVVKMLVELRDGRGEIDDIDNLGNRRVRSVGELMENQYRVGLLRMERAIKERMSSIEIDTVMPQDLINAKPAAAAVREFFGSSQLSQFMDQTNPLSEITHKRRLSALGPGGLTRERAGFEVRDVHPTHYGRICPIETPEGPNIGLINSLATFARVNKYGFIESPYRKVVDGKVTNDVVYLSAMEEAKHSVAQANVELDEQGGFVDEFVICRHAGEVMMAPRENVDLMDVSPKQLVSVAAALIPFLENDDANRALMGSNMQRQAVPLVRAEAPFVGTGMEPIVARDSGAAIAARRGGIVDQVDATRIVIRATEELDPSKSGVDIYRLQKFQRSNQSTCINQRPLVRVGDRIHKGDIIADGPSTDLGDLALGRNVLVAFMPWNGYNYEDSILLSEKIVSDDVFTSIHIEEFEVAARDTKLGPEEITRDIPNVSEEALKNLDEAGIVYIGAEVHPGDILVGKITPKGESPMTPEEKLLRAIFGEKASDVRDTSMRMPPGTYGTVVEVRVFNRHGVEKDERAMAIEREEIERLAKDRDDEQAILDRNVYGRLADMIDGKVAAAGPKGFKKGTTITRELMTEYPRSQWWQFAVEDEKLQGELEALRSQYDDSKKLLEARFMDKVEKVQRGDEMPPGVMKMVKVFVAVKRKIQPGDKMAGRHGNKGVVSRILPVEDMPFLEDGTHADIVLNPLGVPSRMNVGQILETHLGWACAGMGKKIGELLDVYRKTANIEPLRQTLEHIYPDNDRNEPVRSYDDDAILMLANQVKRGVSIATPVFDGAVEADINAMLTDAGLATSGQSTLYDGRTGEPFDRQVTMGYIYMLKLHHLVDDKIHARSIGPYSLVTQQPLGGKAQFGGQRFGEMEVWALEAYGAAYTLQEMLTVKSDDVAGRTKVYEAIVRGDDTFEAGIPESFNVLVKEMRSLGLNVELDDTREAEQPALPDAAE</sequence>